<protein>
    <recommendedName>
        <fullName evidence="1">Peptidase T</fullName>
        <ecNumber evidence="1">3.4.11.4</ecNumber>
    </recommendedName>
    <alternativeName>
        <fullName evidence="1">Aminotripeptidase</fullName>
        <shortName evidence="1">Tripeptidase</shortName>
    </alternativeName>
    <alternativeName>
        <fullName evidence="1">Tripeptide aminopeptidase</fullName>
    </alternativeName>
</protein>
<dbReference type="EC" id="3.4.11.4" evidence="1"/>
<dbReference type="EMBL" id="AL766850">
    <property type="protein sequence ID" value="CAD47118.1"/>
    <property type="molecule type" value="Genomic_DNA"/>
</dbReference>
<dbReference type="RefSeq" id="WP_000119581.1">
    <property type="nucleotide sequence ID" value="NC_004368.1"/>
</dbReference>
<dbReference type="SMR" id="Q8E4E2"/>
<dbReference type="MEROPS" id="M20.003"/>
<dbReference type="KEGG" id="san:gbs1459"/>
<dbReference type="eggNOG" id="COG2195">
    <property type="taxonomic scope" value="Bacteria"/>
</dbReference>
<dbReference type="HOGENOM" id="CLU_053676_0_0_9"/>
<dbReference type="Proteomes" id="UP000000823">
    <property type="component" value="Chromosome"/>
</dbReference>
<dbReference type="GO" id="GO:0005829">
    <property type="term" value="C:cytosol"/>
    <property type="evidence" value="ECO:0007669"/>
    <property type="project" value="TreeGrafter"/>
</dbReference>
<dbReference type="GO" id="GO:0008237">
    <property type="term" value="F:metallopeptidase activity"/>
    <property type="evidence" value="ECO:0007669"/>
    <property type="project" value="UniProtKB-KW"/>
</dbReference>
<dbReference type="GO" id="GO:0045148">
    <property type="term" value="F:tripeptide aminopeptidase activity"/>
    <property type="evidence" value="ECO:0007669"/>
    <property type="project" value="UniProtKB-UniRule"/>
</dbReference>
<dbReference type="GO" id="GO:0008270">
    <property type="term" value="F:zinc ion binding"/>
    <property type="evidence" value="ECO:0007669"/>
    <property type="project" value="UniProtKB-UniRule"/>
</dbReference>
<dbReference type="GO" id="GO:0043171">
    <property type="term" value="P:peptide catabolic process"/>
    <property type="evidence" value="ECO:0007669"/>
    <property type="project" value="UniProtKB-UniRule"/>
</dbReference>
<dbReference type="GO" id="GO:0006508">
    <property type="term" value="P:proteolysis"/>
    <property type="evidence" value="ECO:0007669"/>
    <property type="project" value="UniProtKB-UniRule"/>
</dbReference>
<dbReference type="CDD" id="cd03892">
    <property type="entry name" value="M20_peptT"/>
    <property type="match status" value="1"/>
</dbReference>
<dbReference type="FunFam" id="3.30.70.360:FF:000002">
    <property type="entry name" value="Peptidase T"/>
    <property type="match status" value="1"/>
</dbReference>
<dbReference type="Gene3D" id="3.30.70.360">
    <property type="match status" value="1"/>
</dbReference>
<dbReference type="Gene3D" id="3.40.630.10">
    <property type="entry name" value="Zn peptidases"/>
    <property type="match status" value="1"/>
</dbReference>
<dbReference type="HAMAP" id="MF_00550">
    <property type="entry name" value="Aminopeptidase_M20"/>
    <property type="match status" value="1"/>
</dbReference>
<dbReference type="InterPro" id="IPR001261">
    <property type="entry name" value="ArgE/DapE_CS"/>
</dbReference>
<dbReference type="InterPro" id="IPR036264">
    <property type="entry name" value="Bact_exopeptidase_dim_dom"/>
</dbReference>
<dbReference type="InterPro" id="IPR002933">
    <property type="entry name" value="Peptidase_M20"/>
</dbReference>
<dbReference type="InterPro" id="IPR011650">
    <property type="entry name" value="Peptidase_M20_dimer"/>
</dbReference>
<dbReference type="InterPro" id="IPR010161">
    <property type="entry name" value="Peptidase_M20B"/>
</dbReference>
<dbReference type="NCBIfam" id="TIGR01882">
    <property type="entry name" value="peptidase-T"/>
    <property type="match status" value="1"/>
</dbReference>
<dbReference type="NCBIfam" id="NF003976">
    <property type="entry name" value="PRK05469.1"/>
    <property type="match status" value="1"/>
</dbReference>
<dbReference type="NCBIfam" id="NF009920">
    <property type="entry name" value="PRK13381.1"/>
    <property type="match status" value="1"/>
</dbReference>
<dbReference type="PANTHER" id="PTHR42994">
    <property type="entry name" value="PEPTIDASE T"/>
    <property type="match status" value="1"/>
</dbReference>
<dbReference type="PANTHER" id="PTHR42994:SF1">
    <property type="entry name" value="PEPTIDASE T"/>
    <property type="match status" value="1"/>
</dbReference>
<dbReference type="Pfam" id="PF07687">
    <property type="entry name" value="M20_dimer"/>
    <property type="match status" value="1"/>
</dbReference>
<dbReference type="Pfam" id="PF01546">
    <property type="entry name" value="Peptidase_M20"/>
    <property type="match status" value="1"/>
</dbReference>
<dbReference type="PIRSF" id="PIRSF037215">
    <property type="entry name" value="Peptidase_M20B"/>
    <property type="match status" value="1"/>
</dbReference>
<dbReference type="SUPFAM" id="SSF55031">
    <property type="entry name" value="Bacterial exopeptidase dimerisation domain"/>
    <property type="match status" value="1"/>
</dbReference>
<dbReference type="SUPFAM" id="SSF53187">
    <property type="entry name" value="Zn-dependent exopeptidases"/>
    <property type="match status" value="1"/>
</dbReference>
<dbReference type="PROSITE" id="PS00758">
    <property type="entry name" value="ARGE_DAPE_CPG2_1"/>
    <property type="match status" value="1"/>
</dbReference>
<dbReference type="PROSITE" id="PS00759">
    <property type="entry name" value="ARGE_DAPE_CPG2_2"/>
    <property type="match status" value="1"/>
</dbReference>
<reference key="1">
    <citation type="journal article" date="2002" name="Mol. Microbiol.">
        <title>Genome sequence of Streptococcus agalactiae, a pathogen causing invasive neonatal disease.</title>
        <authorList>
            <person name="Glaser P."/>
            <person name="Rusniok C."/>
            <person name="Buchrieser C."/>
            <person name="Chevalier F."/>
            <person name="Frangeul L."/>
            <person name="Msadek T."/>
            <person name="Zouine M."/>
            <person name="Couve E."/>
            <person name="Lalioui L."/>
            <person name="Poyart C."/>
            <person name="Trieu-Cuot P."/>
            <person name="Kunst F."/>
        </authorList>
    </citation>
    <scope>NUCLEOTIDE SEQUENCE [LARGE SCALE GENOMIC DNA]</scope>
    <source>
        <strain>NEM316</strain>
    </source>
</reference>
<feature type="chain" id="PRO_1000129052" description="Peptidase T">
    <location>
        <begin position="1"/>
        <end position="406"/>
    </location>
</feature>
<feature type="active site" evidence="1">
    <location>
        <position position="84"/>
    </location>
</feature>
<feature type="active site" description="Proton acceptor" evidence="1">
    <location>
        <position position="176"/>
    </location>
</feature>
<feature type="binding site" evidence="1">
    <location>
        <position position="82"/>
    </location>
    <ligand>
        <name>Zn(2+)</name>
        <dbReference type="ChEBI" id="CHEBI:29105"/>
        <label>1</label>
    </ligand>
</feature>
<feature type="binding site" evidence="1">
    <location>
        <position position="142"/>
    </location>
    <ligand>
        <name>Zn(2+)</name>
        <dbReference type="ChEBI" id="CHEBI:29105"/>
        <label>1</label>
    </ligand>
</feature>
<feature type="binding site" evidence="1">
    <location>
        <position position="142"/>
    </location>
    <ligand>
        <name>Zn(2+)</name>
        <dbReference type="ChEBI" id="CHEBI:29105"/>
        <label>2</label>
    </ligand>
</feature>
<feature type="binding site" evidence="1">
    <location>
        <position position="177"/>
    </location>
    <ligand>
        <name>Zn(2+)</name>
        <dbReference type="ChEBI" id="CHEBI:29105"/>
        <label>2</label>
    </ligand>
</feature>
<feature type="binding site" evidence="1">
    <location>
        <position position="199"/>
    </location>
    <ligand>
        <name>Zn(2+)</name>
        <dbReference type="ChEBI" id="CHEBI:29105"/>
        <label>1</label>
    </ligand>
</feature>
<feature type="binding site" evidence="1">
    <location>
        <position position="381"/>
    </location>
    <ligand>
        <name>Zn(2+)</name>
        <dbReference type="ChEBI" id="CHEBI:29105"/>
        <label>2</label>
    </ligand>
</feature>
<accession>Q8E4E2</accession>
<sequence length="406" mass="45337">MSYEKLLERFLTYVKINTRSNPNSTQTPTTQSQVDFALTVLKPEMEAIGLKDVHYLPSNGYLVGTLPATSDRLCHKIGFISHMDTADFNAENITPQIVDYKGGDIELGDSGYILSPKDFPNLNNYHGQTLITTDGKTLLGADDKSGIAEIMTAMEYLASHPEIEHCEIRVGFGPDEEIGIGADKFDVKDFDVDFAYTVDGGPLGELQYETFSAAGLELTFEGRNVHPGTAKNQMINALQLAMDFHSQLPENERPEQTDGYQGFYHLYDLSGTVDQAKSSYIIRDFEEVNFLKRKHLAQDIADNMNEALQSERVKVKLYDQYYNMKKVIEKDMTPINIAKEVMEELDIKPIIEPIRGGTDGSKISFMGIPTPNLFAGGENMHGRFEFVSLQTMEKAVDVILGIVAKD</sequence>
<name>PEPT_STRA3</name>
<keyword id="KW-0031">Aminopeptidase</keyword>
<keyword id="KW-0963">Cytoplasm</keyword>
<keyword id="KW-0378">Hydrolase</keyword>
<keyword id="KW-0479">Metal-binding</keyword>
<keyword id="KW-0482">Metalloprotease</keyword>
<keyword id="KW-0645">Protease</keyword>
<keyword id="KW-0862">Zinc</keyword>
<proteinExistence type="inferred from homology"/>
<comment type="function">
    <text evidence="1">Cleaves the N-terminal amino acid of tripeptides.</text>
</comment>
<comment type="catalytic activity">
    <reaction evidence="1">
        <text>Release of the N-terminal residue from a tripeptide.</text>
        <dbReference type="EC" id="3.4.11.4"/>
    </reaction>
</comment>
<comment type="cofactor">
    <cofactor evidence="1">
        <name>Zn(2+)</name>
        <dbReference type="ChEBI" id="CHEBI:29105"/>
    </cofactor>
    <text evidence="1">Binds 2 Zn(2+) ions per subunit.</text>
</comment>
<comment type="subcellular location">
    <subcellularLocation>
        <location evidence="1">Cytoplasm</location>
    </subcellularLocation>
</comment>
<comment type="similarity">
    <text evidence="1">Belongs to the peptidase M20B family.</text>
</comment>
<evidence type="ECO:0000255" key="1">
    <source>
        <dbReference type="HAMAP-Rule" id="MF_00550"/>
    </source>
</evidence>
<organism>
    <name type="scientific">Streptococcus agalactiae serotype III (strain NEM316)</name>
    <dbReference type="NCBI Taxonomy" id="211110"/>
    <lineage>
        <taxon>Bacteria</taxon>
        <taxon>Bacillati</taxon>
        <taxon>Bacillota</taxon>
        <taxon>Bacilli</taxon>
        <taxon>Lactobacillales</taxon>
        <taxon>Streptococcaceae</taxon>
        <taxon>Streptococcus</taxon>
    </lineage>
</organism>
<gene>
    <name evidence="1" type="primary">pepT</name>
    <name type="ordered locus">gbs1459</name>
</gene>